<protein>
    <recommendedName>
        <fullName evidence="2">D-alanine--D-alanine ligase</fullName>
        <ecNumber evidence="2">6.3.2.4</ecNumber>
    </recommendedName>
    <alternativeName>
        <fullName evidence="2">D-Ala-D-Ala ligase</fullName>
    </alternativeName>
    <alternativeName>
        <fullName evidence="2">D-alanylalanine synthetase</fullName>
    </alternativeName>
</protein>
<organism>
    <name type="scientific">Polaromonas sp. (strain JS666 / ATCC BAA-500)</name>
    <dbReference type="NCBI Taxonomy" id="296591"/>
    <lineage>
        <taxon>Bacteria</taxon>
        <taxon>Pseudomonadati</taxon>
        <taxon>Pseudomonadota</taxon>
        <taxon>Betaproteobacteria</taxon>
        <taxon>Burkholderiales</taxon>
        <taxon>Comamonadaceae</taxon>
        <taxon>Polaromonas</taxon>
    </lineage>
</organism>
<feature type="chain" id="PRO_0000341151" description="D-alanine--D-alanine ligase">
    <location>
        <begin position="1"/>
        <end position="338"/>
    </location>
</feature>
<feature type="domain" description="ATP-grasp" evidence="2">
    <location>
        <begin position="120"/>
        <end position="324"/>
    </location>
</feature>
<feature type="binding site" evidence="2">
    <location>
        <begin position="150"/>
        <end position="205"/>
    </location>
    <ligand>
        <name>ATP</name>
        <dbReference type="ChEBI" id="CHEBI:30616"/>
    </ligand>
</feature>
<feature type="binding site" evidence="2">
    <location>
        <position position="277"/>
    </location>
    <ligand>
        <name>Mg(2+)</name>
        <dbReference type="ChEBI" id="CHEBI:18420"/>
        <label>1</label>
    </ligand>
</feature>
<feature type="binding site" evidence="2">
    <location>
        <position position="291"/>
    </location>
    <ligand>
        <name>Mg(2+)</name>
        <dbReference type="ChEBI" id="CHEBI:18420"/>
        <label>1</label>
    </ligand>
</feature>
<feature type="binding site" evidence="2">
    <location>
        <position position="291"/>
    </location>
    <ligand>
        <name>Mg(2+)</name>
        <dbReference type="ChEBI" id="CHEBI:18420"/>
        <label>2</label>
    </ligand>
</feature>
<feature type="binding site" evidence="2">
    <location>
        <position position="293"/>
    </location>
    <ligand>
        <name>Mg(2+)</name>
        <dbReference type="ChEBI" id="CHEBI:18420"/>
        <label>2</label>
    </ligand>
</feature>
<sequence length="338" mass="35813">MSSNADTSQAVSAGTSVGATFGKVAVLMGGMSAEREISLMSGRGVLQALRSRGVDAHAFDPAERDISELKKDEFARCFIALHGRFGEDGTVQGALELLGIPYTGSGVMASSMAIDKVMTKRVMLAEGLPTPTYVLLRRGSYGSADVSAVPDKLGLPLIVKPAREGSSIGLTKVTERAGMADAVAQAEKLDADILCEQFISGDEVTCPVLGTGSEARALPVIRIVAPDGNYDYQNKYFTDTTQYLVPCGLPEGEEAVIQQLVLQAYRTLNCRGWARADVMIDKVTRKPYLLEINTSPGMTGHSLVPMSARAAGISYEDLCIEVLKTTALDHQSQGGGAS</sequence>
<reference key="1">
    <citation type="journal article" date="2008" name="Appl. Environ. Microbiol.">
        <title>The genome of Polaromonas sp. strain JS666: insights into the evolution of a hydrocarbon- and xenobiotic-degrading bacterium, and features of relevance to biotechnology.</title>
        <authorList>
            <person name="Mattes T.E."/>
            <person name="Alexander A.K."/>
            <person name="Richardson P.M."/>
            <person name="Munk A.C."/>
            <person name="Han C.S."/>
            <person name="Stothard P."/>
            <person name="Coleman N.V."/>
        </authorList>
    </citation>
    <scope>NUCLEOTIDE SEQUENCE [LARGE SCALE GENOMIC DNA]</scope>
    <source>
        <strain>JS666 / ATCC BAA-500</strain>
    </source>
</reference>
<accession>Q12EL3</accession>
<keyword id="KW-0067">ATP-binding</keyword>
<keyword id="KW-0133">Cell shape</keyword>
<keyword id="KW-0961">Cell wall biogenesis/degradation</keyword>
<keyword id="KW-0963">Cytoplasm</keyword>
<keyword id="KW-0436">Ligase</keyword>
<keyword id="KW-0460">Magnesium</keyword>
<keyword id="KW-0464">Manganese</keyword>
<keyword id="KW-0479">Metal-binding</keyword>
<keyword id="KW-0547">Nucleotide-binding</keyword>
<keyword id="KW-0573">Peptidoglycan synthesis</keyword>
<keyword id="KW-1185">Reference proteome</keyword>
<name>DDL_POLSJ</name>
<dbReference type="EC" id="6.3.2.4" evidence="2"/>
<dbReference type="EMBL" id="CP000316">
    <property type="protein sequence ID" value="ABE43029.1"/>
    <property type="molecule type" value="Genomic_DNA"/>
</dbReference>
<dbReference type="RefSeq" id="WP_011482031.1">
    <property type="nucleotide sequence ID" value="NC_007948.1"/>
</dbReference>
<dbReference type="SMR" id="Q12EL3"/>
<dbReference type="STRING" id="296591.Bpro_1077"/>
<dbReference type="KEGG" id="pol:Bpro_1077"/>
<dbReference type="eggNOG" id="COG1181">
    <property type="taxonomic scope" value="Bacteria"/>
</dbReference>
<dbReference type="HOGENOM" id="CLU_039268_1_2_4"/>
<dbReference type="OrthoDB" id="9813261at2"/>
<dbReference type="UniPathway" id="UPA00219"/>
<dbReference type="Proteomes" id="UP000001983">
    <property type="component" value="Chromosome"/>
</dbReference>
<dbReference type="GO" id="GO:0005829">
    <property type="term" value="C:cytosol"/>
    <property type="evidence" value="ECO:0007669"/>
    <property type="project" value="TreeGrafter"/>
</dbReference>
<dbReference type="GO" id="GO:0005524">
    <property type="term" value="F:ATP binding"/>
    <property type="evidence" value="ECO:0007669"/>
    <property type="project" value="UniProtKB-KW"/>
</dbReference>
<dbReference type="GO" id="GO:0008716">
    <property type="term" value="F:D-alanine-D-alanine ligase activity"/>
    <property type="evidence" value="ECO:0007669"/>
    <property type="project" value="UniProtKB-UniRule"/>
</dbReference>
<dbReference type="GO" id="GO:0046872">
    <property type="term" value="F:metal ion binding"/>
    <property type="evidence" value="ECO:0007669"/>
    <property type="project" value="UniProtKB-KW"/>
</dbReference>
<dbReference type="GO" id="GO:0071555">
    <property type="term" value="P:cell wall organization"/>
    <property type="evidence" value="ECO:0007669"/>
    <property type="project" value="UniProtKB-KW"/>
</dbReference>
<dbReference type="GO" id="GO:0009252">
    <property type="term" value="P:peptidoglycan biosynthetic process"/>
    <property type="evidence" value="ECO:0007669"/>
    <property type="project" value="UniProtKB-UniRule"/>
</dbReference>
<dbReference type="GO" id="GO:0008360">
    <property type="term" value="P:regulation of cell shape"/>
    <property type="evidence" value="ECO:0007669"/>
    <property type="project" value="UniProtKB-KW"/>
</dbReference>
<dbReference type="FunFam" id="3.30.470.20:FF:000008">
    <property type="entry name" value="D-alanine--D-alanine ligase"/>
    <property type="match status" value="1"/>
</dbReference>
<dbReference type="FunFam" id="3.40.50.20:FF:000013">
    <property type="entry name" value="D-alanine--D-alanine ligase"/>
    <property type="match status" value="1"/>
</dbReference>
<dbReference type="Gene3D" id="3.40.50.20">
    <property type="match status" value="1"/>
</dbReference>
<dbReference type="Gene3D" id="3.30.1490.20">
    <property type="entry name" value="ATP-grasp fold, A domain"/>
    <property type="match status" value="1"/>
</dbReference>
<dbReference type="Gene3D" id="3.30.470.20">
    <property type="entry name" value="ATP-grasp fold, B domain"/>
    <property type="match status" value="1"/>
</dbReference>
<dbReference type="HAMAP" id="MF_00047">
    <property type="entry name" value="Dala_Dala_lig"/>
    <property type="match status" value="1"/>
</dbReference>
<dbReference type="InterPro" id="IPR011761">
    <property type="entry name" value="ATP-grasp"/>
</dbReference>
<dbReference type="InterPro" id="IPR013815">
    <property type="entry name" value="ATP_grasp_subdomain_1"/>
</dbReference>
<dbReference type="InterPro" id="IPR000291">
    <property type="entry name" value="D-Ala_lig_Van_CS"/>
</dbReference>
<dbReference type="InterPro" id="IPR005905">
    <property type="entry name" value="D_ala_D_ala"/>
</dbReference>
<dbReference type="InterPro" id="IPR011095">
    <property type="entry name" value="Dala_Dala_lig_C"/>
</dbReference>
<dbReference type="InterPro" id="IPR011127">
    <property type="entry name" value="Dala_Dala_lig_N"/>
</dbReference>
<dbReference type="InterPro" id="IPR016185">
    <property type="entry name" value="PreATP-grasp_dom_sf"/>
</dbReference>
<dbReference type="NCBIfam" id="TIGR01205">
    <property type="entry name" value="D_ala_D_alaTIGR"/>
    <property type="match status" value="1"/>
</dbReference>
<dbReference type="NCBIfam" id="NF002378">
    <property type="entry name" value="PRK01372.1"/>
    <property type="match status" value="1"/>
</dbReference>
<dbReference type="PANTHER" id="PTHR23132">
    <property type="entry name" value="D-ALANINE--D-ALANINE LIGASE"/>
    <property type="match status" value="1"/>
</dbReference>
<dbReference type="PANTHER" id="PTHR23132:SF23">
    <property type="entry name" value="D-ALANINE--D-ALANINE LIGASE B"/>
    <property type="match status" value="1"/>
</dbReference>
<dbReference type="Pfam" id="PF07478">
    <property type="entry name" value="Dala_Dala_lig_C"/>
    <property type="match status" value="1"/>
</dbReference>
<dbReference type="Pfam" id="PF01820">
    <property type="entry name" value="Dala_Dala_lig_N"/>
    <property type="match status" value="1"/>
</dbReference>
<dbReference type="PIRSF" id="PIRSF039102">
    <property type="entry name" value="Ddl/VanB"/>
    <property type="match status" value="1"/>
</dbReference>
<dbReference type="SUPFAM" id="SSF56059">
    <property type="entry name" value="Glutathione synthetase ATP-binding domain-like"/>
    <property type="match status" value="1"/>
</dbReference>
<dbReference type="SUPFAM" id="SSF52440">
    <property type="entry name" value="PreATP-grasp domain"/>
    <property type="match status" value="1"/>
</dbReference>
<dbReference type="PROSITE" id="PS50975">
    <property type="entry name" value="ATP_GRASP"/>
    <property type="match status" value="1"/>
</dbReference>
<dbReference type="PROSITE" id="PS00843">
    <property type="entry name" value="DALA_DALA_LIGASE_1"/>
    <property type="match status" value="1"/>
</dbReference>
<dbReference type="PROSITE" id="PS00844">
    <property type="entry name" value="DALA_DALA_LIGASE_2"/>
    <property type="match status" value="1"/>
</dbReference>
<proteinExistence type="inferred from homology"/>
<evidence type="ECO:0000250" key="1"/>
<evidence type="ECO:0000255" key="2">
    <source>
        <dbReference type="HAMAP-Rule" id="MF_00047"/>
    </source>
</evidence>
<gene>
    <name evidence="2" type="primary">ddl</name>
    <name type="ordered locus">Bpro_1077</name>
</gene>
<comment type="function">
    <text evidence="2">Cell wall formation.</text>
</comment>
<comment type="catalytic activity">
    <reaction evidence="2">
        <text>2 D-alanine + ATP = D-alanyl-D-alanine + ADP + phosphate + H(+)</text>
        <dbReference type="Rhea" id="RHEA:11224"/>
        <dbReference type="ChEBI" id="CHEBI:15378"/>
        <dbReference type="ChEBI" id="CHEBI:30616"/>
        <dbReference type="ChEBI" id="CHEBI:43474"/>
        <dbReference type="ChEBI" id="CHEBI:57416"/>
        <dbReference type="ChEBI" id="CHEBI:57822"/>
        <dbReference type="ChEBI" id="CHEBI:456216"/>
        <dbReference type="EC" id="6.3.2.4"/>
    </reaction>
</comment>
<comment type="cofactor">
    <cofactor evidence="1">
        <name>Mg(2+)</name>
        <dbReference type="ChEBI" id="CHEBI:18420"/>
    </cofactor>
    <cofactor evidence="1">
        <name>Mn(2+)</name>
        <dbReference type="ChEBI" id="CHEBI:29035"/>
    </cofactor>
    <text evidence="1">Binds 2 magnesium or manganese ions per subunit.</text>
</comment>
<comment type="pathway">
    <text evidence="2">Cell wall biogenesis; peptidoglycan biosynthesis.</text>
</comment>
<comment type="subcellular location">
    <subcellularLocation>
        <location evidence="2">Cytoplasm</location>
    </subcellularLocation>
</comment>
<comment type="similarity">
    <text evidence="2">Belongs to the D-alanine--D-alanine ligase family.</text>
</comment>